<feature type="chain" id="PRO_1000075166" description="Peptide chain release factor 3">
    <location>
        <begin position="1"/>
        <end position="529"/>
    </location>
</feature>
<feature type="domain" description="tr-type G">
    <location>
        <begin position="11"/>
        <end position="280"/>
    </location>
</feature>
<feature type="binding site" evidence="1">
    <location>
        <begin position="20"/>
        <end position="27"/>
    </location>
    <ligand>
        <name>GTP</name>
        <dbReference type="ChEBI" id="CHEBI:37565"/>
    </ligand>
</feature>
<feature type="binding site" evidence="1">
    <location>
        <begin position="88"/>
        <end position="92"/>
    </location>
    <ligand>
        <name>GTP</name>
        <dbReference type="ChEBI" id="CHEBI:37565"/>
    </ligand>
</feature>
<feature type="binding site" evidence="1">
    <location>
        <begin position="142"/>
        <end position="145"/>
    </location>
    <ligand>
        <name>GTP</name>
        <dbReference type="ChEBI" id="CHEBI:37565"/>
    </ligand>
</feature>
<proteinExistence type="inferred from homology"/>
<reference key="1">
    <citation type="submission" date="2007-11" db="EMBL/GenBank/DDBJ databases">
        <authorList>
            <consortium name="The Salmonella enterica serovar Paratyphi B Genome Sequencing Project"/>
            <person name="McClelland M."/>
            <person name="Sanderson E.K."/>
            <person name="Porwollik S."/>
            <person name="Spieth J."/>
            <person name="Clifton W.S."/>
            <person name="Fulton R."/>
            <person name="Cordes M."/>
            <person name="Wollam A."/>
            <person name="Shah N."/>
            <person name="Pepin K."/>
            <person name="Bhonagiri V."/>
            <person name="Nash W."/>
            <person name="Johnson M."/>
            <person name="Thiruvilangam P."/>
            <person name="Wilson R."/>
        </authorList>
    </citation>
    <scope>NUCLEOTIDE SEQUENCE [LARGE SCALE GENOMIC DNA]</scope>
    <source>
        <strain>ATCC BAA-1250 / SPB7</strain>
    </source>
</reference>
<protein>
    <recommendedName>
        <fullName evidence="1">Peptide chain release factor 3</fullName>
        <shortName evidence="1">RF-3</shortName>
    </recommendedName>
</protein>
<evidence type="ECO:0000255" key="1">
    <source>
        <dbReference type="HAMAP-Rule" id="MF_00072"/>
    </source>
</evidence>
<dbReference type="EMBL" id="CP000886">
    <property type="protein sequence ID" value="ABX71002.1"/>
    <property type="molecule type" value="Genomic_DNA"/>
</dbReference>
<dbReference type="RefSeq" id="WP_000175965.1">
    <property type="nucleotide sequence ID" value="NC_010102.1"/>
</dbReference>
<dbReference type="SMR" id="A9N7C9"/>
<dbReference type="KEGG" id="spq:SPAB_05737"/>
<dbReference type="PATRIC" id="fig|1016998.12.peg.5376"/>
<dbReference type="HOGENOM" id="CLU_002794_2_1_6"/>
<dbReference type="BioCyc" id="SENT1016998:SPAB_RS23415-MONOMER"/>
<dbReference type="Proteomes" id="UP000008556">
    <property type="component" value="Chromosome"/>
</dbReference>
<dbReference type="GO" id="GO:0005829">
    <property type="term" value="C:cytosol"/>
    <property type="evidence" value="ECO:0007669"/>
    <property type="project" value="TreeGrafter"/>
</dbReference>
<dbReference type="GO" id="GO:0005525">
    <property type="term" value="F:GTP binding"/>
    <property type="evidence" value="ECO:0007669"/>
    <property type="project" value="UniProtKB-UniRule"/>
</dbReference>
<dbReference type="GO" id="GO:0003924">
    <property type="term" value="F:GTPase activity"/>
    <property type="evidence" value="ECO:0007669"/>
    <property type="project" value="InterPro"/>
</dbReference>
<dbReference type="GO" id="GO:0097216">
    <property type="term" value="F:guanosine tetraphosphate binding"/>
    <property type="evidence" value="ECO:0007669"/>
    <property type="project" value="UniProtKB-ARBA"/>
</dbReference>
<dbReference type="GO" id="GO:0016150">
    <property type="term" value="F:translation release factor activity, codon nonspecific"/>
    <property type="evidence" value="ECO:0007669"/>
    <property type="project" value="TreeGrafter"/>
</dbReference>
<dbReference type="GO" id="GO:0016149">
    <property type="term" value="F:translation release factor activity, codon specific"/>
    <property type="evidence" value="ECO:0007669"/>
    <property type="project" value="UniProtKB-UniRule"/>
</dbReference>
<dbReference type="GO" id="GO:0006449">
    <property type="term" value="P:regulation of translational termination"/>
    <property type="evidence" value="ECO:0007669"/>
    <property type="project" value="UniProtKB-UniRule"/>
</dbReference>
<dbReference type="CDD" id="cd04169">
    <property type="entry name" value="RF3"/>
    <property type="match status" value="1"/>
</dbReference>
<dbReference type="CDD" id="cd03689">
    <property type="entry name" value="RF3_II"/>
    <property type="match status" value="1"/>
</dbReference>
<dbReference type="CDD" id="cd16259">
    <property type="entry name" value="RF3_III"/>
    <property type="match status" value="1"/>
</dbReference>
<dbReference type="FunFam" id="2.40.30.10:FF:000040">
    <property type="entry name" value="Peptide chain release factor 3"/>
    <property type="match status" value="1"/>
</dbReference>
<dbReference type="FunFam" id="3.30.70.3280:FF:000001">
    <property type="entry name" value="Peptide chain release factor 3"/>
    <property type="match status" value="1"/>
</dbReference>
<dbReference type="FunFam" id="3.40.50.300:FF:000184">
    <property type="entry name" value="Peptide chain release factor 3"/>
    <property type="match status" value="1"/>
</dbReference>
<dbReference type="FunFam" id="3.40.50.300:FF:000253">
    <property type="entry name" value="Peptide chain release factor 3"/>
    <property type="match status" value="1"/>
</dbReference>
<dbReference type="Gene3D" id="3.40.50.300">
    <property type="entry name" value="P-loop containing nucleotide triphosphate hydrolases"/>
    <property type="match status" value="3"/>
</dbReference>
<dbReference type="Gene3D" id="3.30.70.3280">
    <property type="entry name" value="Peptide chain release factor 3, domain III"/>
    <property type="match status" value="1"/>
</dbReference>
<dbReference type="HAMAP" id="MF_00072">
    <property type="entry name" value="Rel_fac_3"/>
    <property type="match status" value="1"/>
</dbReference>
<dbReference type="InterPro" id="IPR053905">
    <property type="entry name" value="EF-G-like_DII"/>
</dbReference>
<dbReference type="InterPro" id="IPR035647">
    <property type="entry name" value="EFG_III/V"/>
</dbReference>
<dbReference type="InterPro" id="IPR031157">
    <property type="entry name" value="G_TR_CS"/>
</dbReference>
<dbReference type="InterPro" id="IPR027417">
    <property type="entry name" value="P-loop_NTPase"/>
</dbReference>
<dbReference type="InterPro" id="IPR004548">
    <property type="entry name" value="PrfC"/>
</dbReference>
<dbReference type="InterPro" id="IPR032090">
    <property type="entry name" value="RF3_C"/>
</dbReference>
<dbReference type="InterPro" id="IPR038467">
    <property type="entry name" value="RF3_dom_3_sf"/>
</dbReference>
<dbReference type="InterPro" id="IPR041732">
    <property type="entry name" value="RF3_GTP-bd"/>
</dbReference>
<dbReference type="InterPro" id="IPR005225">
    <property type="entry name" value="Small_GTP-bd"/>
</dbReference>
<dbReference type="InterPro" id="IPR000795">
    <property type="entry name" value="T_Tr_GTP-bd_dom"/>
</dbReference>
<dbReference type="InterPro" id="IPR009000">
    <property type="entry name" value="Transl_B-barrel_sf"/>
</dbReference>
<dbReference type="NCBIfam" id="TIGR00503">
    <property type="entry name" value="prfC"/>
    <property type="match status" value="1"/>
</dbReference>
<dbReference type="NCBIfam" id="NF001964">
    <property type="entry name" value="PRK00741.1"/>
    <property type="match status" value="1"/>
</dbReference>
<dbReference type="NCBIfam" id="TIGR00231">
    <property type="entry name" value="small_GTP"/>
    <property type="match status" value="1"/>
</dbReference>
<dbReference type="PANTHER" id="PTHR43556">
    <property type="entry name" value="PEPTIDE CHAIN RELEASE FACTOR RF3"/>
    <property type="match status" value="1"/>
</dbReference>
<dbReference type="PANTHER" id="PTHR43556:SF2">
    <property type="entry name" value="PEPTIDE CHAIN RELEASE FACTOR RF3"/>
    <property type="match status" value="1"/>
</dbReference>
<dbReference type="Pfam" id="PF22042">
    <property type="entry name" value="EF-G_D2"/>
    <property type="match status" value="1"/>
</dbReference>
<dbReference type="Pfam" id="PF00009">
    <property type="entry name" value="GTP_EFTU"/>
    <property type="match status" value="1"/>
</dbReference>
<dbReference type="Pfam" id="PF16658">
    <property type="entry name" value="RF3_C"/>
    <property type="match status" value="1"/>
</dbReference>
<dbReference type="PRINTS" id="PR00315">
    <property type="entry name" value="ELONGATNFCT"/>
</dbReference>
<dbReference type="SUPFAM" id="SSF54980">
    <property type="entry name" value="EF-G C-terminal domain-like"/>
    <property type="match status" value="1"/>
</dbReference>
<dbReference type="SUPFAM" id="SSF52540">
    <property type="entry name" value="P-loop containing nucleoside triphosphate hydrolases"/>
    <property type="match status" value="1"/>
</dbReference>
<dbReference type="SUPFAM" id="SSF50447">
    <property type="entry name" value="Translation proteins"/>
    <property type="match status" value="1"/>
</dbReference>
<dbReference type="PROSITE" id="PS00301">
    <property type="entry name" value="G_TR_1"/>
    <property type="match status" value="1"/>
</dbReference>
<dbReference type="PROSITE" id="PS51722">
    <property type="entry name" value="G_TR_2"/>
    <property type="match status" value="1"/>
</dbReference>
<organism>
    <name type="scientific">Salmonella paratyphi B (strain ATCC BAA-1250 / SPB7)</name>
    <dbReference type="NCBI Taxonomy" id="1016998"/>
    <lineage>
        <taxon>Bacteria</taxon>
        <taxon>Pseudomonadati</taxon>
        <taxon>Pseudomonadota</taxon>
        <taxon>Gammaproteobacteria</taxon>
        <taxon>Enterobacterales</taxon>
        <taxon>Enterobacteriaceae</taxon>
        <taxon>Salmonella</taxon>
    </lineage>
</organism>
<sequence length="529" mass="59563">MTLSPYLQEVAKRRTFAIISHPDAGKTTITEKVLLFGQAIQTAGTVKGRGSSQHAKSDWMEMEKQRGISITTSVMQFPYHDCLVNLLDTPGHEDFSEDTYRTLTAVDCCLMVIDAAKGVEDRTRKLMEVTRLRDTPILTFMNKLDRDIRDPMELLDEVENELKIGCAPITWPIGCGKLFKGVYHLYKDETYLYQTGKGHTIQEVRIVKGLNNPDLDAAVGEDLAQQLRDELELVQGASNEFDEELFLAGEITPVFFGTALGNFGVDHMLDGLVAWAPAPMPRQTDTRTVEASEEKFTGFVFKIQANMDPKHRDRVAFMRVVSGKYEKGMKLRQVRTGKDVVISDALTFMAGDRSHVEEAYPGDILGLHNHGTIQIGDTFTQGEMMKFTGIPNFAPELFRRIRLKDPLKQKQLLKGLVQLSEEGAVQVFRPISNNDLIVGAVGVLQFDVVVARLKSEYNVEAIYESVNVATARWVESADAKKFEEFKRKNETQLALDGGDNLTYIAPTMVNLNLTQERYPDVQFRKTREH</sequence>
<comment type="function">
    <text evidence="1">Increases the formation of ribosomal termination complexes and stimulates activities of RF-1 and RF-2. It binds guanine nucleotides and has strong preference for UGA stop codons. It may interact directly with the ribosome. The stimulation of RF-1 and RF-2 is significantly reduced by GTP and GDP, but not by GMP.</text>
</comment>
<comment type="subcellular location">
    <subcellularLocation>
        <location evidence="1">Cytoplasm</location>
    </subcellularLocation>
</comment>
<comment type="similarity">
    <text evidence="1">Belongs to the TRAFAC class translation factor GTPase superfamily. Classic translation factor GTPase family. PrfC subfamily.</text>
</comment>
<name>RF3_SALPB</name>
<accession>A9N7C9</accession>
<gene>
    <name evidence="1" type="primary">prfC</name>
    <name type="ordered locus">SPAB_05737</name>
</gene>
<keyword id="KW-0963">Cytoplasm</keyword>
<keyword id="KW-0342">GTP-binding</keyword>
<keyword id="KW-0547">Nucleotide-binding</keyword>
<keyword id="KW-0648">Protein biosynthesis</keyword>